<feature type="chain" id="PRO_0000180208" description="Acyl carrier protein">
    <location>
        <begin position="1"/>
        <end position="81"/>
    </location>
</feature>
<feature type="domain" description="Carrier" evidence="2">
    <location>
        <begin position="5"/>
        <end position="80"/>
    </location>
</feature>
<feature type="modified residue" description="O-(pantetheine 4'-phosphoryl)serine" evidence="2">
    <location>
        <position position="40"/>
    </location>
</feature>
<feature type="helix" evidence="3">
    <location>
        <begin position="4"/>
        <end position="19"/>
    </location>
</feature>
<feature type="helix" evidence="3">
    <location>
        <begin position="23"/>
        <end position="25"/>
    </location>
</feature>
<feature type="turn" evidence="3">
    <location>
        <begin position="32"/>
        <end position="36"/>
    </location>
</feature>
<feature type="helix" evidence="3">
    <location>
        <begin position="42"/>
        <end position="54"/>
    </location>
</feature>
<feature type="helix" evidence="3">
    <location>
        <begin position="61"/>
        <end position="63"/>
    </location>
</feature>
<feature type="helix" evidence="3">
    <location>
        <begin position="69"/>
        <end position="79"/>
    </location>
</feature>
<gene>
    <name evidence="1" type="primary">acpP</name>
    <name type="ordered locus">TM_0662</name>
</gene>
<proteinExistence type="evidence at protein level"/>
<accession>Q9WZD0</accession>
<dbReference type="EMBL" id="AE000512">
    <property type="protein sequence ID" value="AAD35746.1"/>
    <property type="molecule type" value="Genomic_DNA"/>
</dbReference>
<dbReference type="PIR" id="C72349">
    <property type="entry name" value="C72349"/>
</dbReference>
<dbReference type="RefSeq" id="NP_228471.1">
    <property type="nucleotide sequence ID" value="NC_000853.1"/>
</dbReference>
<dbReference type="RefSeq" id="WP_004081111.1">
    <property type="nucleotide sequence ID" value="NZ_CP011107.1"/>
</dbReference>
<dbReference type="PDB" id="6LVT">
    <property type="method" value="NMR"/>
    <property type="chains" value="A=1-81"/>
</dbReference>
<dbReference type="PDB" id="6LVU">
    <property type="method" value="X-ray"/>
    <property type="resolution" value="2.29 A"/>
    <property type="chains" value="A/B=1-81"/>
</dbReference>
<dbReference type="PDBsum" id="6LVT"/>
<dbReference type="PDBsum" id="6LVU"/>
<dbReference type="SMR" id="Q9WZD0"/>
<dbReference type="FunCoup" id="Q9WZD0">
    <property type="interactions" value="287"/>
</dbReference>
<dbReference type="STRING" id="243274.TM_0662"/>
<dbReference type="PaxDb" id="243274-THEMA_01355"/>
<dbReference type="EnsemblBacteria" id="AAD35746">
    <property type="protein sequence ID" value="AAD35746"/>
    <property type="gene ID" value="TM_0662"/>
</dbReference>
<dbReference type="KEGG" id="tma:TM0662"/>
<dbReference type="KEGG" id="tmi:THEMA_01355"/>
<dbReference type="KEGG" id="tmm:Tmari_0662"/>
<dbReference type="KEGG" id="tmw:THMA_0677"/>
<dbReference type="eggNOG" id="COG0236">
    <property type="taxonomic scope" value="Bacteria"/>
</dbReference>
<dbReference type="InParanoid" id="Q9WZD0"/>
<dbReference type="OrthoDB" id="9804551at2"/>
<dbReference type="UniPathway" id="UPA00094"/>
<dbReference type="Proteomes" id="UP000008183">
    <property type="component" value="Chromosome"/>
</dbReference>
<dbReference type="GO" id="GO:0005829">
    <property type="term" value="C:cytosol"/>
    <property type="evidence" value="ECO:0000318"/>
    <property type="project" value="GO_Central"/>
</dbReference>
<dbReference type="GO" id="GO:0016020">
    <property type="term" value="C:membrane"/>
    <property type="evidence" value="ECO:0007669"/>
    <property type="project" value="GOC"/>
</dbReference>
<dbReference type="GO" id="GO:0000035">
    <property type="term" value="F:acyl binding"/>
    <property type="evidence" value="ECO:0000318"/>
    <property type="project" value="GO_Central"/>
</dbReference>
<dbReference type="GO" id="GO:0000036">
    <property type="term" value="F:acyl carrier activity"/>
    <property type="evidence" value="ECO:0000318"/>
    <property type="project" value="GO_Central"/>
</dbReference>
<dbReference type="GO" id="GO:0009245">
    <property type="term" value="P:lipid A biosynthetic process"/>
    <property type="evidence" value="ECO:0000318"/>
    <property type="project" value="GO_Central"/>
</dbReference>
<dbReference type="Gene3D" id="1.10.1200.10">
    <property type="entry name" value="ACP-like"/>
    <property type="match status" value="1"/>
</dbReference>
<dbReference type="HAMAP" id="MF_01217">
    <property type="entry name" value="Acyl_carrier"/>
    <property type="match status" value="1"/>
</dbReference>
<dbReference type="InterPro" id="IPR003231">
    <property type="entry name" value="ACP"/>
</dbReference>
<dbReference type="InterPro" id="IPR036736">
    <property type="entry name" value="ACP-like_sf"/>
</dbReference>
<dbReference type="InterPro" id="IPR009081">
    <property type="entry name" value="PP-bd_ACP"/>
</dbReference>
<dbReference type="InterPro" id="IPR006162">
    <property type="entry name" value="Ppantetheine_attach_site"/>
</dbReference>
<dbReference type="NCBIfam" id="TIGR00517">
    <property type="entry name" value="acyl_carrier"/>
    <property type="match status" value="1"/>
</dbReference>
<dbReference type="NCBIfam" id="NF002148">
    <property type="entry name" value="PRK00982.1-2"/>
    <property type="match status" value="1"/>
</dbReference>
<dbReference type="NCBIfam" id="NF002150">
    <property type="entry name" value="PRK00982.1-4"/>
    <property type="match status" value="1"/>
</dbReference>
<dbReference type="NCBIfam" id="NF002151">
    <property type="entry name" value="PRK00982.1-5"/>
    <property type="match status" value="1"/>
</dbReference>
<dbReference type="PANTHER" id="PTHR20863">
    <property type="entry name" value="ACYL CARRIER PROTEIN"/>
    <property type="match status" value="1"/>
</dbReference>
<dbReference type="PANTHER" id="PTHR20863:SF76">
    <property type="entry name" value="CARRIER DOMAIN-CONTAINING PROTEIN"/>
    <property type="match status" value="1"/>
</dbReference>
<dbReference type="Pfam" id="PF00550">
    <property type="entry name" value="PP-binding"/>
    <property type="match status" value="1"/>
</dbReference>
<dbReference type="SUPFAM" id="SSF47336">
    <property type="entry name" value="ACP-like"/>
    <property type="match status" value="1"/>
</dbReference>
<dbReference type="PROSITE" id="PS50075">
    <property type="entry name" value="CARRIER"/>
    <property type="match status" value="1"/>
</dbReference>
<dbReference type="PROSITE" id="PS00012">
    <property type="entry name" value="PHOSPHOPANTETHEINE"/>
    <property type="match status" value="1"/>
</dbReference>
<evidence type="ECO:0000255" key="1">
    <source>
        <dbReference type="HAMAP-Rule" id="MF_01217"/>
    </source>
</evidence>
<evidence type="ECO:0000255" key="2">
    <source>
        <dbReference type="PROSITE-ProRule" id="PRU00258"/>
    </source>
</evidence>
<evidence type="ECO:0007829" key="3">
    <source>
        <dbReference type="PDB" id="6LVU"/>
    </source>
</evidence>
<name>ACP_THEMA</name>
<comment type="function">
    <text evidence="1">Carrier of the growing fatty acid chain in fatty acid biosynthesis.</text>
</comment>
<comment type="pathway">
    <text evidence="1">Lipid metabolism; fatty acid biosynthesis.</text>
</comment>
<comment type="subcellular location">
    <subcellularLocation>
        <location evidence="1">Cytoplasm</location>
    </subcellularLocation>
</comment>
<comment type="PTM">
    <text evidence="1">4'-phosphopantetheine is transferred from CoA to a specific serine of apo-ACP by AcpS. This modification is essential for activity because fatty acids are bound in thioester linkage to the sulfhydryl of the prosthetic group.</text>
</comment>
<comment type="similarity">
    <text evidence="1">Belongs to the acyl carrier protein (ACP) family.</text>
</comment>
<organism>
    <name type="scientific">Thermotoga maritima (strain ATCC 43589 / DSM 3109 / JCM 10099 / NBRC 100826 / MSB8)</name>
    <dbReference type="NCBI Taxonomy" id="243274"/>
    <lineage>
        <taxon>Bacteria</taxon>
        <taxon>Thermotogati</taxon>
        <taxon>Thermotogota</taxon>
        <taxon>Thermotogae</taxon>
        <taxon>Thermotogales</taxon>
        <taxon>Thermotogaceae</taxon>
        <taxon>Thermotoga</taxon>
    </lineage>
</organism>
<reference key="1">
    <citation type="journal article" date="1999" name="Nature">
        <title>Evidence for lateral gene transfer between Archaea and Bacteria from genome sequence of Thermotoga maritima.</title>
        <authorList>
            <person name="Nelson K.E."/>
            <person name="Clayton R.A."/>
            <person name="Gill S.R."/>
            <person name="Gwinn M.L."/>
            <person name="Dodson R.J."/>
            <person name="Haft D.H."/>
            <person name="Hickey E.K."/>
            <person name="Peterson J.D."/>
            <person name="Nelson W.C."/>
            <person name="Ketchum K.A."/>
            <person name="McDonald L.A."/>
            <person name="Utterback T.R."/>
            <person name="Malek J.A."/>
            <person name="Linher K.D."/>
            <person name="Garrett M.M."/>
            <person name="Stewart A.M."/>
            <person name="Cotton M.D."/>
            <person name="Pratt M.S."/>
            <person name="Phillips C.A."/>
            <person name="Richardson D.L."/>
            <person name="Heidelberg J.F."/>
            <person name="Sutton G.G."/>
            <person name="Fleischmann R.D."/>
            <person name="Eisen J.A."/>
            <person name="White O."/>
            <person name="Salzberg S.L."/>
            <person name="Smith H.O."/>
            <person name="Venter J.C."/>
            <person name="Fraser C.M."/>
        </authorList>
    </citation>
    <scope>NUCLEOTIDE SEQUENCE [LARGE SCALE GENOMIC DNA]</scope>
    <source>
        <strain>ATCC 43589 / DSM 3109 / JCM 10099 / NBRC 100826 / MSB8</strain>
    </source>
</reference>
<sequence>MASREEIFSKVKSIISEKLGVDESQVTEEAKLIDDLGADSLDLVDLVMDFESEFGVKVDDADLEKISTVGDIVSYIEKKLG</sequence>
<keyword id="KW-0002">3D-structure</keyword>
<keyword id="KW-0963">Cytoplasm</keyword>
<keyword id="KW-0275">Fatty acid biosynthesis</keyword>
<keyword id="KW-0276">Fatty acid metabolism</keyword>
<keyword id="KW-0444">Lipid biosynthesis</keyword>
<keyword id="KW-0443">Lipid metabolism</keyword>
<keyword id="KW-0596">Phosphopantetheine</keyword>
<keyword id="KW-0597">Phosphoprotein</keyword>
<keyword id="KW-1185">Reference proteome</keyword>
<protein>
    <recommendedName>
        <fullName evidence="1">Acyl carrier protein</fullName>
        <shortName evidence="1">ACP</shortName>
    </recommendedName>
</protein>